<comment type="function">
    <text evidence="1">This protein binds specifically to 23S rRNA.</text>
</comment>
<comment type="function">
    <text evidence="1">The globular domain of the protein is located near the polypeptide exit tunnel on the outside of the subunit, while an extended beta-hairpin is found that lines the wall of the exit tunnel in the center of the 70S ribosome.</text>
</comment>
<comment type="subunit">
    <text evidence="1">Part of the 50S ribosomal subunit.</text>
</comment>
<comment type="subcellular location">
    <subcellularLocation>
        <location>Plastid</location>
        <location>Chloroplast</location>
    </subcellularLocation>
</comment>
<comment type="similarity">
    <text evidence="2">Belongs to the universal ribosomal protein uL22 family.</text>
</comment>
<dbReference type="EMBL" id="DQ995205">
    <property type="protein sequence ID" value="ABJ91320.1"/>
    <property type="molecule type" value="Genomic_DNA"/>
</dbReference>
<dbReference type="EMBL" id="AP006715">
    <property type="protein sequence ID" value="BAE92432.1"/>
    <property type="molecule type" value="Genomic_DNA"/>
</dbReference>
<dbReference type="RefSeq" id="YP_536989.1">
    <property type="nucleotide sequence ID" value="NC_007932.1"/>
</dbReference>
<dbReference type="SMR" id="Q1XDH9"/>
<dbReference type="GeneID" id="3978865"/>
<dbReference type="GO" id="GO:0009507">
    <property type="term" value="C:chloroplast"/>
    <property type="evidence" value="ECO:0007669"/>
    <property type="project" value="UniProtKB-SubCell"/>
</dbReference>
<dbReference type="GO" id="GO:0022625">
    <property type="term" value="C:cytosolic large ribosomal subunit"/>
    <property type="evidence" value="ECO:0007669"/>
    <property type="project" value="TreeGrafter"/>
</dbReference>
<dbReference type="GO" id="GO:0019843">
    <property type="term" value="F:rRNA binding"/>
    <property type="evidence" value="ECO:0007669"/>
    <property type="project" value="UniProtKB-UniRule"/>
</dbReference>
<dbReference type="GO" id="GO:0003735">
    <property type="term" value="F:structural constituent of ribosome"/>
    <property type="evidence" value="ECO:0007669"/>
    <property type="project" value="InterPro"/>
</dbReference>
<dbReference type="GO" id="GO:0006412">
    <property type="term" value="P:translation"/>
    <property type="evidence" value="ECO:0007669"/>
    <property type="project" value="UniProtKB-UniRule"/>
</dbReference>
<dbReference type="CDD" id="cd00336">
    <property type="entry name" value="Ribosomal_L22"/>
    <property type="match status" value="1"/>
</dbReference>
<dbReference type="Gene3D" id="3.90.470.10">
    <property type="entry name" value="Ribosomal protein L22/L17"/>
    <property type="match status" value="1"/>
</dbReference>
<dbReference type="HAMAP" id="MF_01331_B">
    <property type="entry name" value="Ribosomal_uL22_B"/>
    <property type="match status" value="1"/>
</dbReference>
<dbReference type="InterPro" id="IPR001063">
    <property type="entry name" value="Ribosomal_uL22"/>
</dbReference>
<dbReference type="InterPro" id="IPR005727">
    <property type="entry name" value="Ribosomal_uL22_bac/chlpt-type"/>
</dbReference>
<dbReference type="InterPro" id="IPR047867">
    <property type="entry name" value="Ribosomal_uL22_bac/org-type"/>
</dbReference>
<dbReference type="InterPro" id="IPR018260">
    <property type="entry name" value="Ribosomal_uL22_CS"/>
</dbReference>
<dbReference type="InterPro" id="IPR036394">
    <property type="entry name" value="Ribosomal_uL22_sf"/>
</dbReference>
<dbReference type="NCBIfam" id="TIGR01044">
    <property type="entry name" value="rplV_bact"/>
    <property type="match status" value="1"/>
</dbReference>
<dbReference type="PANTHER" id="PTHR13501">
    <property type="entry name" value="CHLOROPLAST 50S RIBOSOMAL PROTEIN L22-RELATED"/>
    <property type="match status" value="1"/>
</dbReference>
<dbReference type="PANTHER" id="PTHR13501:SF8">
    <property type="entry name" value="LARGE RIBOSOMAL SUBUNIT PROTEIN UL22M"/>
    <property type="match status" value="1"/>
</dbReference>
<dbReference type="Pfam" id="PF00237">
    <property type="entry name" value="Ribosomal_L22"/>
    <property type="match status" value="1"/>
</dbReference>
<dbReference type="SUPFAM" id="SSF54843">
    <property type="entry name" value="Ribosomal protein L22"/>
    <property type="match status" value="1"/>
</dbReference>
<dbReference type="PROSITE" id="PS00464">
    <property type="entry name" value="RIBOSOMAL_L22"/>
    <property type="match status" value="1"/>
</dbReference>
<keyword id="KW-0150">Chloroplast</keyword>
<keyword id="KW-0934">Plastid</keyword>
<keyword id="KW-0687">Ribonucleoprotein</keyword>
<keyword id="KW-0689">Ribosomal protein</keyword>
<keyword id="KW-0694">RNA-binding</keyword>
<keyword id="KW-0699">rRNA-binding</keyword>
<protein>
    <recommendedName>
        <fullName evidence="2">Large ribosomal subunit protein uL22c</fullName>
    </recommendedName>
    <alternativeName>
        <fullName>50S ribosomal protein L22, chloroplastic</fullName>
    </alternativeName>
</protein>
<feature type="chain" id="PRO_0000243244" description="Large ribosomal subunit protein uL22c">
    <location>
        <begin position="1"/>
        <end position="117"/>
    </location>
</feature>
<accession>Q1XDH9</accession>
<accession>A0MMB2</accession>
<geneLocation type="chloroplast"/>
<organism>
    <name type="scientific">Pyropia yezoensis</name>
    <name type="common">Susabi-nori</name>
    <name type="synonym">Porphyra yezoensis</name>
    <dbReference type="NCBI Taxonomy" id="2788"/>
    <lineage>
        <taxon>Eukaryota</taxon>
        <taxon>Rhodophyta</taxon>
        <taxon>Bangiophyceae</taxon>
        <taxon>Bangiales</taxon>
        <taxon>Bangiaceae</taxon>
        <taxon>Pyropia</taxon>
    </lineage>
</organism>
<sequence length="117" mass="13309">MSITKNVKETKAVGKYIRLSPHKVRRVLDQIRGRKYQEALIILEFMPYRVCSHIKQILESAAANAEHNDGLNKNQLFVSKAFADKGPTLKRFQPRAQGRAFPIHKPTCHITLGVSEL</sequence>
<evidence type="ECO:0000250" key="1"/>
<evidence type="ECO:0000305" key="2"/>
<name>RK22_PYRYE</name>
<proteinExistence type="inferred from homology"/>
<gene>
    <name type="primary">rpl22</name>
</gene>
<reference key="1">
    <citation type="submission" date="2006-09" db="EMBL/GenBank/DDBJ databases">
        <title>Cloning and analysis of the Porphyra yezoensis gene for rpl22.</title>
        <authorList>
            <person name="Wang M.Q."/>
            <person name="Mao Y.X."/>
        </authorList>
    </citation>
    <scope>NUCLEOTIDE SEQUENCE [GENOMIC DNA]</scope>
    <source>
        <strain>Qingdao</strain>
    </source>
</reference>
<reference key="2">
    <citation type="submission" date="2003-11" db="EMBL/GenBank/DDBJ databases">
        <title>Whole genome sequence of Porphyra yezoensis chloroplast.</title>
        <authorList>
            <person name="Kunimoto M."/>
            <person name="Morishima K."/>
            <person name="Yoshikawa M."/>
            <person name="Fukuda S."/>
            <person name="Kobayashi T."/>
            <person name="Kobayashi M."/>
            <person name="Okazaki T."/>
            <person name="Ohara I."/>
            <person name="Nakayama I."/>
        </authorList>
    </citation>
    <scope>NUCLEOTIDE SEQUENCE [LARGE SCALE GENOMIC DNA]</scope>
    <source>
        <strain>U-51</strain>
    </source>
</reference>